<sequence length="468" mass="54760">MQNMMNTSQSFQNDSVLIGDKNTLQSINKSVDNGSKNTHGITGIMNLGNTCYMNSALQALSHNYLLINYLFMNKKQIIRTLLTNARKIFKDCDNFKIESTISPIPLELRKKIQSENYHLSMLTVEDVNILLNNTITAQIIRLFECMWKNNCVVVPTSFRKVFGEVRDKFFFGYEQHDAEEAYSCIIQKMQEELAEKRTIRFKTTRHSVGEYIKYMNDVKEKVSCLPNGKEKDIVMNKFKQIKKQMPRESLTAESFREMKKYYEQGYSYITEIFSGYVHSSICCPNTSCGFTNDRFDAFTHLSLSIPVKNMYEQLNVYDCLREYFSQETLDADNLWNCEGCHEKVQAIKKTKLWTTPYVLVIQFKRFGMTRIAKDNRFINYPMDELDVSSVICSQQFEDSVQTKYKLQCVINHHGGLNNGHYFTYSKIENTGEWYEFNDTYTGKVTDNHIVNQNAYILFYIRSDLFRSQ</sequence>
<feature type="chain" id="PRO_0000080700" description="Probable ubiquitin carboxyl-terminal hydrolase R319">
    <location>
        <begin position="1"/>
        <end position="468"/>
    </location>
</feature>
<feature type="domain" description="USP">
    <location>
        <begin position="42"/>
        <end position="462"/>
    </location>
</feature>
<feature type="active site" description="Nucleophile" evidence="1 2">
    <location>
        <position position="51"/>
    </location>
</feature>
<feature type="active site" description="Proton acceptor" evidence="1 2">
    <location>
        <position position="420"/>
    </location>
</feature>
<comment type="catalytic activity">
    <reaction>
        <text>Thiol-dependent hydrolysis of ester, thioester, amide, peptide and isopeptide bonds formed by the C-terminal Gly of ubiquitin (a 76-residue protein attached to proteins as an intracellular targeting signal).</text>
        <dbReference type="EC" id="3.4.19.12"/>
    </reaction>
</comment>
<comment type="similarity">
    <text evidence="3">Belongs to the peptidase C19 family.</text>
</comment>
<proteinExistence type="inferred from homology"/>
<protein>
    <recommendedName>
        <fullName>Probable ubiquitin carboxyl-terminal hydrolase R319</fullName>
        <ecNumber>3.4.19.12</ecNumber>
    </recommendedName>
    <alternativeName>
        <fullName>Deubiquitinating enzyme R319</fullName>
    </alternativeName>
    <alternativeName>
        <fullName>Ubiquitin thioesterase R319</fullName>
    </alternativeName>
    <alternativeName>
        <fullName>Ubiquitin-specific-processing protease R319</fullName>
    </alternativeName>
</protein>
<organismHost>
    <name type="scientific">Acanthamoeba polyphaga</name>
    <name type="common">Amoeba</name>
    <dbReference type="NCBI Taxonomy" id="5757"/>
</organismHost>
<organism>
    <name type="scientific">Acanthamoeba polyphaga mimivirus</name>
    <name type="common">APMV</name>
    <dbReference type="NCBI Taxonomy" id="212035"/>
    <lineage>
        <taxon>Viruses</taxon>
        <taxon>Varidnaviria</taxon>
        <taxon>Bamfordvirae</taxon>
        <taxon>Nucleocytoviricota</taxon>
        <taxon>Megaviricetes</taxon>
        <taxon>Imitervirales</taxon>
        <taxon>Mimiviridae</taxon>
        <taxon>Megamimivirinae</taxon>
        <taxon>Mimivirus</taxon>
        <taxon>Mimivirus bradfordmassiliense</taxon>
    </lineage>
</organism>
<keyword id="KW-0378">Hydrolase</keyword>
<keyword id="KW-0645">Protease</keyword>
<keyword id="KW-1185">Reference proteome</keyword>
<keyword id="KW-0788">Thiol protease</keyword>
<keyword id="KW-0833">Ubl conjugation pathway</keyword>
<accession>Q5UQR3</accession>
<name>UBPL1_MIMIV</name>
<evidence type="ECO:0000255" key="1">
    <source>
        <dbReference type="PROSITE-ProRule" id="PRU10092"/>
    </source>
</evidence>
<evidence type="ECO:0000255" key="2">
    <source>
        <dbReference type="PROSITE-ProRule" id="PRU10093"/>
    </source>
</evidence>
<evidence type="ECO:0000305" key="3"/>
<reference key="1">
    <citation type="journal article" date="2004" name="Science">
        <title>The 1.2-megabase genome sequence of Mimivirus.</title>
        <authorList>
            <person name="Raoult D."/>
            <person name="Audic S."/>
            <person name="Robert C."/>
            <person name="Abergel C."/>
            <person name="Renesto P."/>
            <person name="Ogata H."/>
            <person name="La Scola B."/>
            <person name="Susan M."/>
            <person name="Claverie J.-M."/>
        </authorList>
    </citation>
    <scope>NUCLEOTIDE SEQUENCE [LARGE SCALE GENOMIC DNA]</scope>
    <source>
        <strain>Rowbotham-Bradford</strain>
    </source>
</reference>
<gene>
    <name type="ordered locus">MIMI_R319</name>
</gene>
<dbReference type="EC" id="3.4.19.12"/>
<dbReference type="EMBL" id="AY653733">
    <property type="protein sequence ID" value="AAV50588.1"/>
    <property type="molecule type" value="Genomic_DNA"/>
</dbReference>
<dbReference type="SMR" id="Q5UQR3"/>
<dbReference type="KEGG" id="vg:9924936"/>
<dbReference type="OrthoDB" id="8303at10239"/>
<dbReference type="Proteomes" id="UP000001134">
    <property type="component" value="Genome"/>
</dbReference>
<dbReference type="GO" id="GO:0004843">
    <property type="term" value="F:cysteine-type deubiquitinase activity"/>
    <property type="evidence" value="ECO:0007669"/>
    <property type="project" value="UniProtKB-EC"/>
</dbReference>
<dbReference type="GO" id="GO:0016579">
    <property type="term" value="P:protein deubiquitination"/>
    <property type="evidence" value="ECO:0007669"/>
    <property type="project" value="InterPro"/>
</dbReference>
<dbReference type="GO" id="GO:0006508">
    <property type="term" value="P:proteolysis"/>
    <property type="evidence" value="ECO:0007669"/>
    <property type="project" value="UniProtKB-KW"/>
</dbReference>
<dbReference type="CDD" id="cd02674">
    <property type="entry name" value="Peptidase_C19R"/>
    <property type="match status" value="1"/>
</dbReference>
<dbReference type="Gene3D" id="3.90.70.10">
    <property type="entry name" value="Cysteine proteinases"/>
    <property type="match status" value="1"/>
</dbReference>
<dbReference type="InterPro" id="IPR038765">
    <property type="entry name" value="Papain-like_cys_pep_sf"/>
</dbReference>
<dbReference type="InterPro" id="IPR001394">
    <property type="entry name" value="Peptidase_C19_UCH"/>
</dbReference>
<dbReference type="InterPro" id="IPR050185">
    <property type="entry name" value="Ub_carboxyl-term_hydrolase"/>
</dbReference>
<dbReference type="InterPro" id="IPR018200">
    <property type="entry name" value="USP_CS"/>
</dbReference>
<dbReference type="InterPro" id="IPR028889">
    <property type="entry name" value="USP_dom"/>
</dbReference>
<dbReference type="PANTHER" id="PTHR21646">
    <property type="entry name" value="UBIQUITIN CARBOXYL-TERMINAL HYDROLASE"/>
    <property type="match status" value="1"/>
</dbReference>
<dbReference type="Pfam" id="PF00443">
    <property type="entry name" value="UCH"/>
    <property type="match status" value="1"/>
</dbReference>
<dbReference type="SUPFAM" id="SSF54001">
    <property type="entry name" value="Cysteine proteinases"/>
    <property type="match status" value="1"/>
</dbReference>
<dbReference type="PROSITE" id="PS00972">
    <property type="entry name" value="USP_1"/>
    <property type="match status" value="1"/>
</dbReference>
<dbReference type="PROSITE" id="PS00973">
    <property type="entry name" value="USP_2"/>
    <property type="match status" value="1"/>
</dbReference>
<dbReference type="PROSITE" id="PS50235">
    <property type="entry name" value="USP_3"/>
    <property type="match status" value="1"/>
</dbReference>